<proteinExistence type="evidence at protein level"/>
<feature type="chain" id="PRO_0000205769" description="Clathrin light chain A">
    <location>
        <begin position="1"/>
        <end position="248"/>
    </location>
</feature>
<feature type="region of interest" description="Disordered" evidence="5">
    <location>
        <begin position="1"/>
        <end position="93"/>
    </location>
</feature>
<feature type="region of interest" description="Involved in binding clathrin heavy chain">
    <location>
        <begin position="100"/>
        <end position="162"/>
    </location>
</feature>
<feature type="compositionally biased region" description="Gly residues" evidence="5">
    <location>
        <begin position="13"/>
        <end position="25"/>
    </location>
</feature>
<feature type="modified residue" description="Phosphoserine" evidence="3">
    <location>
        <position position="105"/>
    </location>
</feature>
<feature type="modified residue" description="Phosphoserine" evidence="3">
    <location>
        <position position="206"/>
    </location>
</feature>
<feature type="modified residue" description="N6-acetyllysine" evidence="4">
    <location>
        <position position="223"/>
    </location>
</feature>
<feature type="modified residue" description="Phosphoserine" evidence="3">
    <location>
        <position position="236"/>
    </location>
</feature>
<feature type="modified residue" description="N6-acetyllysine" evidence="2">
    <location>
        <position position="242"/>
    </location>
</feature>
<feature type="splice variant" id="VSP_001096" description="In isoform Non-brain." evidence="6">
    <location>
        <begin position="163"/>
        <end position="192"/>
    </location>
</feature>
<organism>
    <name type="scientific">Rattus norvegicus</name>
    <name type="common">Rat</name>
    <dbReference type="NCBI Taxonomy" id="10116"/>
    <lineage>
        <taxon>Eukaryota</taxon>
        <taxon>Metazoa</taxon>
        <taxon>Chordata</taxon>
        <taxon>Craniata</taxon>
        <taxon>Vertebrata</taxon>
        <taxon>Euteleostomi</taxon>
        <taxon>Mammalia</taxon>
        <taxon>Eutheria</taxon>
        <taxon>Euarchontoglires</taxon>
        <taxon>Glires</taxon>
        <taxon>Rodentia</taxon>
        <taxon>Myomorpha</taxon>
        <taxon>Muroidea</taxon>
        <taxon>Muridae</taxon>
        <taxon>Murinae</taxon>
        <taxon>Rattus</taxon>
    </lineage>
</organism>
<accession>P08081</accession>
<name>CLCA_RAT</name>
<keyword id="KW-0007">Acetylation</keyword>
<keyword id="KW-0025">Alternative splicing</keyword>
<keyword id="KW-0106">Calcium</keyword>
<keyword id="KW-0131">Cell cycle</keyword>
<keyword id="KW-0132">Cell division</keyword>
<keyword id="KW-0168">Coated pit</keyword>
<keyword id="KW-0963">Cytoplasm</keyword>
<keyword id="KW-0968">Cytoplasmic vesicle</keyword>
<keyword id="KW-0206">Cytoskeleton</keyword>
<keyword id="KW-0903">Direct protein sequencing</keyword>
<keyword id="KW-0472">Membrane</keyword>
<keyword id="KW-0498">Mitosis</keyword>
<keyword id="KW-0597">Phosphoprotein</keyword>
<keyword id="KW-1185">Reference proteome</keyword>
<evidence type="ECO:0000250" key="1"/>
<evidence type="ECO:0000250" key="2">
    <source>
        <dbReference type="UniProtKB" id="O08585"/>
    </source>
</evidence>
<evidence type="ECO:0000250" key="3">
    <source>
        <dbReference type="UniProtKB" id="P09496"/>
    </source>
</evidence>
<evidence type="ECO:0000250" key="4">
    <source>
        <dbReference type="UniProtKB" id="Q6IRU5"/>
    </source>
</evidence>
<evidence type="ECO:0000256" key="5">
    <source>
        <dbReference type="SAM" id="MobiDB-lite"/>
    </source>
</evidence>
<evidence type="ECO:0000303" key="6">
    <source>
    </source>
</evidence>
<evidence type="ECO:0000305" key="7"/>
<sequence length="248" mass="26981">MAELDPFGAPAGAPGGPALGNGVAGAGEEDPAAAFLAQQESEIAGIENDEAFAILDGGAPGPQAHGEPPGGPDAVDGVMNGEYYQESNGPTDSYAAISEVDRLQSEPESIRKWREEQTERLEALDANSRKQEAEWKEKAVKELEEWYARQDEQLQKTKASNRVADEAFYKQPFADVIGYVTNINHPCYSLEQAAEEAFVNDIDESSPGTEWERVARLCDFNPKSSKQAKDVSRMRSVLISLKQAPLVH</sequence>
<comment type="function">
    <text evidence="3">Clathrin is the major protein of the polyhedral coat of coated pits and vesicles. Acts as a component of the TACC3/ch-TOG/clathrin complex proposed to contribute to stabilization of kinetochore fibers of the mitotic spindle by acting as inter-microtubule bridge (By similarity).</text>
</comment>
<comment type="subunit">
    <text evidence="1 3">Clathrin coats are formed from molecules containing 3 heavy chains and 3 light chains. Interacts with CALY; the interaction stimulates clathrin self-assembly and clathrin-mediated endocytosis (By similarity). Interacts with CKAP5 and TACC3 forming the TACC3/ch-TOG/clathrin complex located at spindle inter-microtubules bridges; the complex implicates clathrin triskelions (By similarity).</text>
</comment>
<comment type="interaction">
    <interactant intactId="EBI-916140">
        <id>P08081</id>
    </interactant>
    <interactant intactId="EBI-287204">
        <id>P53563-1</id>
        <label>Bcl2l1</label>
    </interactant>
    <organismsDiffer>false</organismsDiffer>
    <experiments>2</experiments>
</comment>
<comment type="interaction">
    <interactant intactId="EBI-916140">
        <id>P08081</id>
    </interactant>
    <interactant intactId="EBI-7121510">
        <id>P49418</id>
        <label>AMPH</label>
    </interactant>
    <organismsDiffer>true</organismsDiffer>
    <experiments>3</experiments>
</comment>
<comment type="subcellular location">
    <subcellularLocation>
        <location>Cytoplasmic vesicle membrane</location>
        <topology>Peripheral membrane protein</topology>
        <orientation>Cytoplasmic side</orientation>
    </subcellularLocation>
    <subcellularLocation>
        <location>Membrane</location>
        <location>Coated pit</location>
        <topology>Peripheral membrane protein</topology>
        <orientation>Cytoplasmic side</orientation>
    </subcellularLocation>
    <subcellularLocation>
        <location evidence="3">Cytoplasm</location>
        <location evidence="3">Cytoskeleton</location>
        <location evidence="3">Spindle</location>
    </subcellularLocation>
    <text evidence="3">Cytoplasmic face of coated pits and vesicles. In complex with TACC3 and CKAP5 (forming the TACC3/ch-TOG/clathrin complex) localized to inter-microtubule bridges in mitotic spindles.</text>
</comment>
<comment type="alternative products">
    <event type="alternative splicing"/>
    <isoform>
        <id>P08081-1</id>
        <name>Brain</name>
        <sequence type="displayed"/>
    </isoform>
    <isoform>
        <id>P08081-2</id>
        <name>Non-brain</name>
        <sequence type="described" ref="VSP_001096"/>
    </isoform>
</comment>
<comment type="similarity">
    <text evidence="7">Belongs to the clathrin light chain family.</text>
</comment>
<protein>
    <recommendedName>
        <fullName>Clathrin light chain A</fullName>
        <shortName>Lca</shortName>
    </recommendedName>
</protein>
<reference key="1">
    <citation type="journal article" date="1987" name="Science">
        <title>Clathrin light chains LCA and LCB are similar, polymorphic, and share repeated heptad motifs.</title>
        <authorList>
            <person name="Kirchhausen T."/>
            <person name="Scarmato P."/>
            <person name="Harrison S.C."/>
            <person name="Monroe J.J."/>
            <person name="Chow E.P."/>
            <person name="Mattaliano R.J."/>
            <person name="Ramachandran K.L."/>
            <person name="Smart J.E."/>
            <person name="Ahn A.H."/>
            <person name="Brosius J."/>
        </authorList>
    </citation>
    <scope>NUCLEOTIDE SEQUENCE [MRNA] (ISOFORMS BRAIN AND NON-BRAIN)</scope>
</reference>
<reference key="2">
    <citation type="submission" date="2007-04" db="UniProtKB">
        <authorList>
            <person name="Lubec G."/>
            <person name="Chen W.-Q."/>
        </authorList>
    </citation>
    <scope>PROTEIN SEQUENCE OF 103-111; 121-129; 142-149; 163-170; 217-223 AND 236-242</scope>
    <scope>IDENTIFICATION BY MASS SPECTROMETRY</scope>
    <source>
        <strain>Sprague-Dawley</strain>
        <tissue>Hippocampus</tissue>
    </source>
</reference>
<reference key="3">
    <citation type="journal article" date="2012" name="Nat. Commun.">
        <title>Quantitative maps of protein phosphorylation sites across 14 different rat organs and tissues.</title>
        <authorList>
            <person name="Lundby A."/>
            <person name="Secher A."/>
            <person name="Lage K."/>
            <person name="Nordsborg N.B."/>
            <person name="Dmytriyev A."/>
            <person name="Lundby C."/>
            <person name="Olsen J.V."/>
        </authorList>
    </citation>
    <scope>IDENTIFICATION BY MASS SPECTROMETRY [LARGE SCALE ANALYSIS]</scope>
</reference>
<dbReference type="EMBL" id="M15882">
    <property type="protein sequence ID" value="AAA40868.1"/>
    <property type="molecule type" value="mRNA"/>
</dbReference>
<dbReference type="EMBL" id="M19261">
    <property type="protein sequence ID" value="AAA40870.1"/>
    <property type="molecule type" value="mRNA"/>
</dbReference>
<dbReference type="EMBL" id="M19260">
    <property type="protein sequence ID" value="AAA40869.1"/>
    <property type="molecule type" value="mRNA"/>
</dbReference>
<dbReference type="PIR" id="A25994">
    <property type="entry name" value="LRRTA1"/>
</dbReference>
<dbReference type="RefSeq" id="NP_114180.1">
    <molecule id="P08081-1"/>
    <property type="nucleotide sequence ID" value="NM_031974.1"/>
</dbReference>
<dbReference type="RefSeq" id="XP_006238166.1">
    <property type="nucleotide sequence ID" value="XM_006238104.2"/>
</dbReference>
<dbReference type="RefSeq" id="XP_006238168.1">
    <molecule id="P08081-2"/>
    <property type="nucleotide sequence ID" value="XM_006238106.4"/>
</dbReference>
<dbReference type="EMDB" id="EMD-3442"/>
<dbReference type="EMDB" id="EMD-4035"/>
<dbReference type="EMDB" id="EMD-4036"/>
<dbReference type="SMR" id="P08081"/>
<dbReference type="BioGRID" id="249837">
    <property type="interactions" value="16"/>
</dbReference>
<dbReference type="CORUM" id="P08081"/>
<dbReference type="DIP" id="DIP-36947N"/>
<dbReference type="FunCoup" id="P08081">
    <property type="interactions" value="3854"/>
</dbReference>
<dbReference type="IntAct" id="P08081">
    <property type="interactions" value="7"/>
</dbReference>
<dbReference type="MINT" id="P08081"/>
<dbReference type="STRING" id="10116.ENSRNOP00000019737"/>
<dbReference type="GlyGen" id="P08081">
    <property type="glycosylation" value="1 site"/>
</dbReference>
<dbReference type="iPTMnet" id="P08081"/>
<dbReference type="PhosphoSitePlus" id="P08081"/>
<dbReference type="SwissPalm" id="P08081"/>
<dbReference type="jPOST" id="P08081"/>
<dbReference type="PaxDb" id="10116-ENSRNOP00000019737"/>
<dbReference type="Ensembl" id="ENSRNOT00000019737.6">
    <molecule id="P08081-1"/>
    <property type="protein sequence ID" value="ENSRNOP00000019737.2"/>
    <property type="gene ID" value="ENSRNOG00000014635.9"/>
</dbReference>
<dbReference type="Ensembl" id="ENSRNOT00000036366.7">
    <molecule id="P08081-2"/>
    <property type="protein sequence ID" value="ENSRNOP00000035138.4"/>
    <property type="gene ID" value="ENSRNOG00000014635.9"/>
</dbReference>
<dbReference type="GeneID" id="83800"/>
<dbReference type="KEGG" id="rno:83800"/>
<dbReference type="UCSC" id="RGD:70919">
    <molecule id="P08081-1"/>
    <property type="organism name" value="rat"/>
</dbReference>
<dbReference type="AGR" id="RGD:70919"/>
<dbReference type="CTD" id="1211"/>
<dbReference type="RGD" id="70919">
    <property type="gene designation" value="Clta"/>
</dbReference>
<dbReference type="eggNOG" id="KOG4031">
    <property type="taxonomic scope" value="Eukaryota"/>
</dbReference>
<dbReference type="GeneTree" id="ENSGT00940000157347"/>
<dbReference type="InParanoid" id="P08081"/>
<dbReference type="OMA" id="XAAEEAF"/>
<dbReference type="OrthoDB" id="5512at2759"/>
<dbReference type="PhylomeDB" id="P08081"/>
<dbReference type="TreeFam" id="TF313162"/>
<dbReference type="Reactome" id="R-RNO-177504">
    <property type="pathway name" value="Retrograde neurotrophin signalling"/>
</dbReference>
<dbReference type="Reactome" id="R-RNO-190873">
    <property type="pathway name" value="Gap junction degradation"/>
</dbReference>
<dbReference type="Reactome" id="R-RNO-196025">
    <property type="pathway name" value="Formation of annular gap junctions"/>
</dbReference>
<dbReference type="Reactome" id="R-RNO-2132295">
    <property type="pathway name" value="MHC class II antigen presentation"/>
</dbReference>
<dbReference type="Reactome" id="R-RNO-432720">
    <property type="pathway name" value="Lysosome Vesicle Biogenesis"/>
</dbReference>
<dbReference type="Reactome" id="R-RNO-432722">
    <property type="pathway name" value="Golgi Associated Vesicle Biogenesis"/>
</dbReference>
<dbReference type="Reactome" id="R-RNO-437239">
    <property type="pathway name" value="Recycling pathway of L1"/>
</dbReference>
<dbReference type="Reactome" id="R-RNO-5099900">
    <property type="pathway name" value="WNT5A-dependent internalization of FZD4"/>
</dbReference>
<dbReference type="Reactome" id="R-RNO-5140745">
    <property type="pathway name" value="WNT5A-dependent internalization of FZD2, FZD5 and ROR2"/>
</dbReference>
<dbReference type="Reactome" id="R-RNO-8856825">
    <property type="pathway name" value="Cargo recognition for clathrin-mediated endocytosis"/>
</dbReference>
<dbReference type="Reactome" id="R-RNO-8856828">
    <property type="pathway name" value="Clathrin-mediated endocytosis"/>
</dbReference>
<dbReference type="Reactome" id="R-RNO-8866427">
    <property type="pathway name" value="VLDLR internalisation and degradation"/>
</dbReference>
<dbReference type="Reactome" id="R-RNO-8964038">
    <property type="pathway name" value="LDL clearance"/>
</dbReference>
<dbReference type="PRO" id="PR:P08081"/>
<dbReference type="Proteomes" id="UP000002494">
    <property type="component" value="Chromosome 5"/>
</dbReference>
<dbReference type="Bgee" id="ENSRNOG00000014635">
    <property type="expression patterns" value="Expressed in cerebellum and 20 other cell types or tissues"/>
</dbReference>
<dbReference type="ExpressionAtlas" id="P08081">
    <property type="expression patterns" value="baseline and differential"/>
</dbReference>
<dbReference type="GO" id="GO:0030118">
    <property type="term" value="C:clathrin coat"/>
    <property type="evidence" value="ECO:0000314"/>
    <property type="project" value="RGD"/>
</dbReference>
<dbReference type="GO" id="GO:0030132">
    <property type="term" value="C:clathrin coat of coated pit"/>
    <property type="evidence" value="ECO:0000303"/>
    <property type="project" value="RGD"/>
</dbReference>
<dbReference type="GO" id="GO:0030130">
    <property type="term" value="C:clathrin coat of trans-Golgi network vesicle"/>
    <property type="evidence" value="ECO:0007669"/>
    <property type="project" value="InterPro"/>
</dbReference>
<dbReference type="GO" id="GO:0071439">
    <property type="term" value="C:clathrin complex"/>
    <property type="evidence" value="ECO:0000266"/>
    <property type="project" value="RGD"/>
</dbReference>
<dbReference type="GO" id="GO:0030125">
    <property type="term" value="C:clathrin vesicle coat"/>
    <property type="evidence" value="ECO:0000318"/>
    <property type="project" value="GO_Central"/>
</dbReference>
<dbReference type="GO" id="GO:0030669">
    <property type="term" value="C:clathrin-coated endocytic vesicle membrane"/>
    <property type="evidence" value="ECO:0000304"/>
    <property type="project" value="Reactome"/>
</dbReference>
<dbReference type="GO" id="GO:0005905">
    <property type="term" value="C:clathrin-coated pit"/>
    <property type="evidence" value="ECO:0000314"/>
    <property type="project" value="RGD"/>
</dbReference>
<dbReference type="GO" id="GO:0030136">
    <property type="term" value="C:clathrin-coated vesicle"/>
    <property type="evidence" value="ECO:0000314"/>
    <property type="project" value="RGD"/>
</dbReference>
<dbReference type="GO" id="GO:0031410">
    <property type="term" value="C:cytoplasmic vesicle"/>
    <property type="evidence" value="ECO:0000266"/>
    <property type="project" value="RGD"/>
</dbReference>
<dbReference type="GO" id="GO:0005768">
    <property type="term" value="C:endosome"/>
    <property type="evidence" value="ECO:0007669"/>
    <property type="project" value="Ensembl"/>
</dbReference>
<dbReference type="GO" id="GO:0098978">
    <property type="term" value="C:glutamatergic synapse"/>
    <property type="evidence" value="ECO:0000266"/>
    <property type="project" value="RGD"/>
</dbReference>
<dbReference type="GO" id="GO:0005764">
    <property type="term" value="C:lysosome"/>
    <property type="evidence" value="ECO:0007669"/>
    <property type="project" value="Ensembl"/>
</dbReference>
<dbReference type="GO" id="GO:0005886">
    <property type="term" value="C:plasma membrane"/>
    <property type="evidence" value="ECO:0000318"/>
    <property type="project" value="GO_Central"/>
</dbReference>
<dbReference type="GO" id="GO:0098843">
    <property type="term" value="C:postsynaptic endocytic zone"/>
    <property type="evidence" value="ECO:0000314"/>
    <property type="project" value="SynGO"/>
</dbReference>
<dbReference type="GO" id="GO:0098835">
    <property type="term" value="C:presynaptic endocytic zone membrane"/>
    <property type="evidence" value="ECO:0000314"/>
    <property type="project" value="SynGO"/>
</dbReference>
<dbReference type="GO" id="GO:0005819">
    <property type="term" value="C:spindle"/>
    <property type="evidence" value="ECO:0007669"/>
    <property type="project" value="UniProtKB-SubCell"/>
</dbReference>
<dbReference type="GO" id="GO:0030672">
    <property type="term" value="C:synaptic vesicle membrane"/>
    <property type="evidence" value="ECO:0000314"/>
    <property type="project" value="CAFA"/>
</dbReference>
<dbReference type="GO" id="GO:0032050">
    <property type="term" value="F:clathrin heavy chain binding"/>
    <property type="evidence" value="ECO:0000266"/>
    <property type="project" value="RGD"/>
</dbReference>
<dbReference type="GO" id="GO:0051020">
    <property type="term" value="F:GTPase binding"/>
    <property type="evidence" value="ECO:0000353"/>
    <property type="project" value="CAFA"/>
</dbReference>
<dbReference type="GO" id="GO:0042277">
    <property type="term" value="F:peptide binding"/>
    <property type="evidence" value="ECO:0000314"/>
    <property type="project" value="RGD"/>
</dbReference>
<dbReference type="GO" id="GO:0044877">
    <property type="term" value="F:protein-containing complex binding"/>
    <property type="evidence" value="ECO:0000353"/>
    <property type="project" value="RGD"/>
</dbReference>
<dbReference type="GO" id="GO:0005198">
    <property type="term" value="F:structural molecule activity"/>
    <property type="evidence" value="ECO:0007669"/>
    <property type="project" value="InterPro"/>
</dbReference>
<dbReference type="GO" id="GO:0051301">
    <property type="term" value="P:cell division"/>
    <property type="evidence" value="ECO:0007669"/>
    <property type="project" value="UniProtKB-KW"/>
</dbReference>
<dbReference type="GO" id="GO:0048268">
    <property type="term" value="P:clathrin coat assembly"/>
    <property type="evidence" value="ECO:0000266"/>
    <property type="project" value="RGD"/>
</dbReference>
<dbReference type="GO" id="GO:0072583">
    <property type="term" value="P:clathrin-dependent endocytosis"/>
    <property type="evidence" value="ECO:0000318"/>
    <property type="project" value="GO_Central"/>
</dbReference>
<dbReference type="GO" id="GO:0006897">
    <property type="term" value="P:endocytosis"/>
    <property type="evidence" value="ECO:0000270"/>
    <property type="project" value="RGD"/>
</dbReference>
<dbReference type="GO" id="GO:0006886">
    <property type="term" value="P:intracellular protein transport"/>
    <property type="evidence" value="ECO:0007669"/>
    <property type="project" value="InterPro"/>
</dbReference>
<dbReference type="GO" id="GO:0048488">
    <property type="term" value="P:synaptic vesicle endocytosis"/>
    <property type="evidence" value="ECO:0000314"/>
    <property type="project" value="SynGO"/>
</dbReference>
<dbReference type="InterPro" id="IPR000996">
    <property type="entry name" value="Clathrin_L-chain"/>
</dbReference>
<dbReference type="PANTHER" id="PTHR10639">
    <property type="entry name" value="CLATHRIN LIGHT CHAIN"/>
    <property type="match status" value="1"/>
</dbReference>
<dbReference type="PANTHER" id="PTHR10639:SF1">
    <property type="entry name" value="CLATHRIN LIGHT CHAIN A"/>
    <property type="match status" value="1"/>
</dbReference>
<dbReference type="Pfam" id="PF01086">
    <property type="entry name" value="Clathrin_lg_ch"/>
    <property type="match status" value="1"/>
</dbReference>
<dbReference type="PROSITE" id="PS00224">
    <property type="entry name" value="CLATHRIN_LIGHT_CHN_1"/>
    <property type="match status" value="1"/>
</dbReference>
<dbReference type="PROSITE" id="PS00581">
    <property type="entry name" value="CLATHRIN_LIGHT_CHN_2"/>
    <property type="match status" value="1"/>
</dbReference>
<gene>
    <name type="primary">Clta</name>
</gene>